<dbReference type="EMBL" id="CM000781">
    <property type="protein sequence ID" value="AQK74547.1"/>
    <property type="status" value="ALT_SEQ"/>
    <property type="molecule type" value="Genomic_DNA"/>
</dbReference>
<dbReference type="EMBL" id="BT061051">
    <property type="protein sequence ID" value="ACN25748.1"/>
    <property type="molecule type" value="mRNA"/>
</dbReference>
<dbReference type="RefSeq" id="NP_001159310.1">
    <property type="nucleotide sequence ID" value="NM_001165838.1"/>
</dbReference>
<dbReference type="RefSeq" id="XP_008643905.1">
    <property type="nucleotide sequence ID" value="XM_008645683.1"/>
</dbReference>
<dbReference type="SMR" id="C0HFE5"/>
<dbReference type="FunCoup" id="C0HFE5">
    <property type="interactions" value="3747"/>
</dbReference>
<dbReference type="STRING" id="4577.C0HFE5"/>
<dbReference type="PaxDb" id="4577-GRMZM5G899787_P01"/>
<dbReference type="EnsemblPlants" id="Zm00001eb253560_T003">
    <property type="protein sequence ID" value="Zm00001eb253560_P003"/>
    <property type="gene ID" value="Zm00001eb253560"/>
</dbReference>
<dbReference type="GeneID" id="100304402"/>
<dbReference type="Gramene" id="Zm00001eb253560_T003">
    <property type="protein sequence ID" value="Zm00001eb253560_P003"/>
    <property type="gene ID" value="Zm00001eb253560"/>
</dbReference>
<dbReference type="KEGG" id="zma:100304402"/>
<dbReference type="eggNOG" id="KOG0118">
    <property type="taxonomic scope" value="Eukaryota"/>
</dbReference>
<dbReference type="InParanoid" id="C0HFE5"/>
<dbReference type="OrthoDB" id="4207594at2759"/>
<dbReference type="Proteomes" id="UP000007305">
    <property type="component" value="Chromosome 5"/>
</dbReference>
<dbReference type="ExpressionAtlas" id="C0HFE5">
    <property type="expression patterns" value="baseline and differential"/>
</dbReference>
<dbReference type="GO" id="GO:0009507">
    <property type="term" value="C:chloroplast"/>
    <property type="evidence" value="ECO:0007669"/>
    <property type="project" value="UniProtKB-SubCell"/>
</dbReference>
<dbReference type="GO" id="GO:0005739">
    <property type="term" value="C:mitochondrion"/>
    <property type="evidence" value="ECO:0000318"/>
    <property type="project" value="GO_Central"/>
</dbReference>
<dbReference type="GO" id="GO:0003723">
    <property type="term" value="F:RNA binding"/>
    <property type="evidence" value="ECO:0007669"/>
    <property type="project" value="UniProtKB-KW"/>
</dbReference>
<dbReference type="GO" id="GO:1900871">
    <property type="term" value="P:chloroplast mRNA modification"/>
    <property type="evidence" value="ECO:0000315"/>
    <property type="project" value="UniProtKB"/>
</dbReference>
<dbReference type="GO" id="GO:0016554">
    <property type="term" value="P:cytidine to uridine editing"/>
    <property type="evidence" value="ECO:0000315"/>
    <property type="project" value="UniProtKB"/>
</dbReference>
<dbReference type="GO" id="GO:0080156">
    <property type="term" value="P:mitochondrial mRNA modification"/>
    <property type="evidence" value="ECO:0000318"/>
    <property type="project" value="GO_Central"/>
</dbReference>
<dbReference type="GO" id="GO:0006397">
    <property type="term" value="P:mRNA processing"/>
    <property type="evidence" value="ECO:0007669"/>
    <property type="project" value="UniProtKB-KW"/>
</dbReference>
<dbReference type="FunFam" id="3.30.70.330:FF:000474">
    <property type="entry name" value="Organelle RRM domain-containing protein 1, chloroplastic"/>
    <property type="match status" value="1"/>
</dbReference>
<dbReference type="FunFam" id="3.30.70.80:FF:000007">
    <property type="entry name" value="Organelle RRM domain-containing protein 1, chloroplastic"/>
    <property type="match status" value="1"/>
</dbReference>
<dbReference type="FunFam" id="3.30.70.80:FF:000009">
    <property type="entry name" value="Organelle RRM domain-containing protein 1, chloroplastic"/>
    <property type="match status" value="1"/>
</dbReference>
<dbReference type="Gene3D" id="3.30.70.330">
    <property type="match status" value="1"/>
</dbReference>
<dbReference type="Gene3D" id="3.30.70.80">
    <property type="entry name" value="Peptidase S8 propeptide/proteinase inhibitor I9"/>
    <property type="match status" value="2"/>
</dbReference>
<dbReference type="InterPro" id="IPR039206">
    <property type="entry name" value="MORF/ORRM1/DAG-like"/>
</dbReference>
<dbReference type="InterPro" id="IPR054059">
    <property type="entry name" value="MORF/ORRM1/DAG-like_MORF"/>
</dbReference>
<dbReference type="InterPro" id="IPR012677">
    <property type="entry name" value="Nucleotide-bd_a/b_plait_sf"/>
</dbReference>
<dbReference type="InterPro" id="IPR035979">
    <property type="entry name" value="RBD_domain_sf"/>
</dbReference>
<dbReference type="InterPro" id="IPR000504">
    <property type="entry name" value="RRM_dom"/>
</dbReference>
<dbReference type="InterPro" id="IPR037045">
    <property type="entry name" value="S8pro/Inhibitor_I9_sf"/>
</dbReference>
<dbReference type="PANTHER" id="PTHR31346">
    <property type="entry name" value="MULTIPLE ORGANELLAR RNA EDITING FACTOR 2, CHLOROPLASTIC-RELATED-RELATED"/>
    <property type="match status" value="1"/>
</dbReference>
<dbReference type="Pfam" id="PF21864">
    <property type="entry name" value="MORF_dom"/>
    <property type="match status" value="2"/>
</dbReference>
<dbReference type="Pfam" id="PF00076">
    <property type="entry name" value="RRM_1"/>
    <property type="match status" value="1"/>
</dbReference>
<dbReference type="SMART" id="SM00360">
    <property type="entry name" value="RRM"/>
    <property type="match status" value="1"/>
</dbReference>
<dbReference type="SUPFAM" id="SSF54928">
    <property type="entry name" value="RNA-binding domain, RBD"/>
    <property type="match status" value="1"/>
</dbReference>
<dbReference type="PROSITE" id="PS50102">
    <property type="entry name" value="RRM"/>
    <property type="match status" value="1"/>
</dbReference>
<gene>
    <name type="primary">ORRM1</name>
    <name evidence="7" type="ORF">ZEAMMB73_Zm00001d017930</name>
</gene>
<proteinExistence type="evidence at transcript level"/>
<reference key="1">
    <citation type="journal article" date="2009" name="Science">
        <title>The B73 maize genome: complexity, diversity, and dynamics.</title>
        <authorList>
            <person name="Schnable P.S."/>
            <person name="Ware D."/>
            <person name="Fulton R.S."/>
            <person name="Stein J.C."/>
            <person name="Wei F."/>
            <person name="Pasternak S."/>
            <person name="Liang C."/>
            <person name="Zhang J."/>
            <person name="Fulton L."/>
            <person name="Graves T.A."/>
            <person name="Minx P."/>
            <person name="Reily A.D."/>
            <person name="Courtney L."/>
            <person name="Kruchowski S.S."/>
            <person name="Tomlinson C."/>
            <person name="Strong C."/>
            <person name="Delehaunty K."/>
            <person name="Fronick C."/>
            <person name="Courtney B."/>
            <person name="Rock S.M."/>
            <person name="Belter E."/>
            <person name="Du F."/>
            <person name="Kim K."/>
            <person name="Abbott R.M."/>
            <person name="Cotton M."/>
            <person name="Levy A."/>
            <person name="Marchetto P."/>
            <person name="Ochoa K."/>
            <person name="Jackson S.M."/>
            <person name="Gillam B."/>
            <person name="Chen W."/>
            <person name="Yan L."/>
            <person name="Higginbotham J."/>
            <person name="Cardenas M."/>
            <person name="Waligorski J."/>
            <person name="Applebaum E."/>
            <person name="Phelps L."/>
            <person name="Falcone J."/>
            <person name="Kanchi K."/>
            <person name="Thane T."/>
            <person name="Scimone A."/>
            <person name="Thane N."/>
            <person name="Henke J."/>
            <person name="Wang T."/>
            <person name="Ruppert J."/>
            <person name="Shah N."/>
            <person name="Rotter K."/>
            <person name="Hodges J."/>
            <person name="Ingenthron E."/>
            <person name="Cordes M."/>
            <person name="Kohlberg S."/>
            <person name="Sgro J."/>
            <person name="Delgado B."/>
            <person name="Mead K."/>
            <person name="Chinwalla A."/>
            <person name="Leonard S."/>
            <person name="Crouse K."/>
            <person name="Collura K."/>
            <person name="Kudrna D."/>
            <person name="Currie J."/>
            <person name="He R."/>
            <person name="Angelova A."/>
            <person name="Rajasekar S."/>
            <person name="Mueller T."/>
            <person name="Lomeli R."/>
            <person name="Scara G."/>
            <person name="Ko A."/>
            <person name="Delaney K."/>
            <person name="Wissotski M."/>
            <person name="Lopez G."/>
            <person name="Campos D."/>
            <person name="Braidotti M."/>
            <person name="Ashley E."/>
            <person name="Golser W."/>
            <person name="Kim H."/>
            <person name="Lee S."/>
            <person name="Lin J."/>
            <person name="Dujmic Z."/>
            <person name="Kim W."/>
            <person name="Talag J."/>
            <person name="Zuccolo A."/>
            <person name="Fan C."/>
            <person name="Sebastian A."/>
            <person name="Kramer M."/>
            <person name="Spiegel L."/>
            <person name="Nascimento L."/>
            <person name="Zutavern T."/>
            <person name="Miller B."/>
            <person name="Ambroise C."/>
            <person name="Muller S."/>
            <person name="Spooner W."/>
            <person name="Narechania A."/>
            <person name="Ren L."/>
            <person name="Wei S."/>
            <person name="Kumari S."/>
            <person name="Faga B."/>
            <person name="Levy M.J."/>
            <person name="McMahan L."/>
            <person name="Van Buren P."/>
            <person name="Vaughn M.W."/>
            <person name="Ying K."/>
            <person name="Yeh C.-T."/>
            <person name="Emrich S.J."/>
            <person name="Jia Y."/>
            <person name="Kalyanaraman A."/>
            <person name="Hsia A.-P."/>
            <person name="Barbazuk W.B."/>
            <person name="Baucom R.S."/>
            <person name="Brutnell T.P."/>
            <person name="Carpita N.C."/>
            <person name="Chaparro C."/>
            <person name="Chia J.-M."/>
            <person name="Deragon J.-M."/>
            <person name="Estill J.C."/>
            <person name="Fu Y."/>
            <person name="Jeddeloh J.A."/>
            <person name="Han Y."/>
            <person name="Lee H."/>
            <person name="Li P."/>
            <person name="Lisch D.R."/>
            <person name="Liu S."/>
            <person name="Liu Z."/>
            <person name="Nagel D.H."/>
            <person name="McCann M.C."/>
            <person name="SanMiguel P."/>
            <person name="Myers A.M."/>
            <person name="Nettleton D."/>
            <person name="Nguyen J."/>
            <person name="Penning B.W."/>
            <person name="Ponnala L."/>
            <person name="Schneider K.L."/>
            <person name="Schwartz D.C."/>
            <person name="Sharma A."/>
            <person name="Soderlund C."/>
            <person name="Springer N.M."/>
            <person name="Sun Q."/>
            <person name="Wang H."/>
            <person name="Waterman M."/>
            <person name="Westerman R."/>
            <person name="Wolfgruber T.K."/>
            <person name="Yang L."/>
            <person name="Yu Y."/>
            <person name="Zhang L."/>
            <person name="Zhou S."/>
            <person name="Zhu Q."/>
            <person name="Bennetzen J.L."/>
            <person name="Dawe R.K."/>
            <person name="Jiang J."/>
            <person name="Jiang N."/>
            <person name="Presting G.G."/>
            <person name="Wessler S.R."/>
            <person name="Aluru S."/>
            <person name="Martienssen R.A."/>
            <person name="Clifton S.W."/>
            <person name="McCombie W.R."/>
            <person name="Wing R.A."/>
            <person name="Wilson R.K."/>
        </authorList>
    </citation>
    <scope>NUCLEOTIDE SEQUENCE [LARGE SCALE GENOMIC DNA]</scope>
    <source>
        <strain>cv. B73</strain>
    </source>
</reference>
<reference key="2">
    <citation type="journal article" date="2009" name="PLoS Genet.">
        <title>Sequencing, mapping, and analysis of 27,455 maize full-length cDNAs.</title>
        <authorList>
            <person name="Soderlund C."/>
            <person name="Descour A."/>
            <person name="Kudrna D."/>
            <person name="Bomhoff M."/>
            <person name="Boyd L."/>
            <person name="Currie J."/>
            <person name="Angelova A."/>
            <person name="Collura K."/>
            <person name="Wissotski M."/>
            <person name="Ashley E."/>
            <person name="Morrow D."/>
            <person name="Fernandes J."/>
            <person name="Walbot V."/>
            <person name="Yu Y."/>
        </authorList>
    </citation>
    <scope>NUCLEOTIDE SEQUENCE [LARGE SCALE MRNA]</scope>
    <source>
        <strain>cv. B73</strain>
    </source>
</reference>
<reference key="3">
    <citation type="journal article" date="2013" name="Proc. Natl. Acad. Sci. U.S.A.">
        <title>An RNA recognition motif-containing protein is required for plastid RNA editing in Arabidopsis and maize.</title>
        <authorList>
            <person name="Sun T."/>
            <person name="Germain A."/>
            <person name="Giloteaux L."/>
            <person name="Hammani K."/>
            <person name="Barkan A."/>
            <person name="Hanson M.R."/>
            <person name="Bentolila S."/>
        </authorList>
    </citation>
    <scope>FUNCTION</scope>
    <scope>DISRUPTION PHENOTYPE</scope>
</reference>
<protein>
    <recommendedName>
        <fullName evidence="5">Organelle RRM domain-containing protein 1, chloroplastic</fullName>
        <shortName evidence="5">ZmORRM1</shortName>
    </recommendedName>
</protein>
<keyword id="KW-0150">Chloroplast</keyword>
<keyword id="KW-0507">mRNA processing</keyword>
<keyword id="KW-0934">Plastid</keyword>
<keyword id="KW-1185">Reference proteome</keyword>
<keyword id="KW-0694">RNA-binding</keyword>
<keyword id="KW-0809">Transit peptide</keyword>
<sequence>MDTALPSVLIGGGLSVSVSISTATKAGSQSISSHLSTSSLRLTARHRNRRRLPLLASSSESPPAQLAAASTESQSRSSRWVVVMDTPPAAAGGSGVSRAEAVDYYAATLAQVVGSEKEAQMRICEASWDGTYEFRCEIDEDASKELAKMPGVLSVQLDMGNKSEKDNHSLSLSTANLVSISDGASTSSSGKNEFWLVRMEKPGVEVVTKAQMVDHYTQILMKVLGNEQDAQVSIYHVSWDRDYGFCCHIDEECAKELADVPGVLSVQPDTNFGSDNKNYKGDDGVKSSEGTGAVDIKTKRLFVTGLSFYTSEKTLRAAFEPFGELVEVKIIMDRISKRSKGYAFVEYTTEEAGGAALKAMNGQIINGWMIVVDVAKTRSRDRLSGGSNQAFRPHYQAR</sequence>
<organism>
    <name type="scientific">Zea mays</name>
    <name type="common">Maize</name>
    <dbReference type="NCBI Taxonomy" id="4577"/>
    <lineage>
        <taxon>Eukaryota</taxon>
        <taxon>Viridiplantae</taxon>
        <taxon>Streptophyta</taxon>
        <taxon>Embryophyta</taxon>
        <taxon>Tracheophyta</taxon>
        <taxon>Spermatophyta</taxon>
        <taxon>Magnoliopsida</taxon>
        <taxon>Liliopsida</taxon>
        <taxon>Poales</taxon>
        <taxon>Poaceae</taxon>
        <taxon>PACMAD clade</taxon>
        <taxon>Panicoideae</taxon>
        <taxon>Andropogonodae</taxon>
        <taxon>Andropogoneae</taxon>
        <taxon>Tripsacinae</taxon>
        <taxon>Zea</taxon>
    </lineage>
</organism>
<feature type="transit peptide" description="Chloroplast" evidence="1">
    <location>
        <begin position="1"/>
        <end position="88"/>
    </location>
</feature>
<feature type="chain" id="PRO_0000441880" description="Organelle RRM domain-containing protein 1, chloroplastic">
    <location>
        <begin position="89"/>
        <end position="398"/>
    </location>
</feature>
<feature type="domain" description="RRM" evidence="2">
    <location>
        <begin position="299"/>
        <end position="377"/>
    </location>
</feature>
<feature type="region of interest" description="Disordered" evidence="3">
    <location>
        <begin position="54"/>
        <end position="79"/>
    </location>
</feature>
<feature type="compositionally biased region" description="Low complexity" evidence="3">
    <location>
        <begin position="54"/>
        <end position="70"/>
    </location>
</feature>
<accession>C0HFE5</accession>
<accession>A0A1D6HJ90</accession>
<name>ORRM1_MAIZE</name>
<evidence type="ECO:0000255" key="1"/>
<evidence type="ECO:0000255" key="2">
    <source>
        <dbReference type="PROSITE-ProRule" id="PRU00176"/>
    </source>
</evidence>
<evidence type="ECO:0000256" key="3">
    <source>
        <dbReference type="SAM" id="MobiDB-lite"/>
    </source>
</evidence>
<evidence type="ECO:0000269" key="4">
    <source>
    </source>
</evidence>
<evidence type="ECO:0000303" key="5">
    <source>
    </source>
</evidence>
<evidence type="ECO:0000305" key="6"/>
<evidence type="ECO:0000312" key="7">
    <source>
        <dbReference type="EMBL" id="AQK74547.1"/>
    </source>
</evidence>
<comment type="function">
    <text evidence="4">Involved in C-to-U editing of chloroplastic RNA. Functions as major chloroplastic editing factor. Controls a majority of the chloroplastic editing sites.</text>
</comment>
<comment type="subcellular location">
    <subcellularLocation>
        <location evidence="1">Plastid</location>
        <location evidence="1">Chloroplast</location>
    </subcellularLocation>
</comment>
<comment type="disruption phenotype">
    <text evidence="4">Pale-green leaf phenotype.</text>
</comment>
<comment type="sequence caution" evidence="6">
    <conflict type="erroneous gene model prediction">
        <sequence resource="EMBL-CDS" id="AQK74547"/>
    </conflict>
</comment>